<reference key="1">
    <citation type="submission" date="2006-09" db="EMBL/GenBank/DDBJ databases">
        <authorList>
            <consortium name="NIH - Xenopus Gene Collection (XGC) project"/>
        </authorList>
    </citation>
    <scope>NUCLEOTIDE SEQUENCE [LARGE SCALE MRNA]</scope>
    <source>
        <tissue>Ovary</tissue>
    </source>
</reference>
<accession>Q0IH28</accession>
<name>DRS7B_XENLA</name>
<protein>
    <recommendedName>
        <fullName evidence="2">Dehydrogenase/reductase SDR family member 7B</fullName>
        <ecNumber evidence="6">1.1.-.-</ecNumber>
    </recommendedName>
    <alternativeName>
        <fullName evidence="2">Short-chain dehydrogenase/reductase family 32C member 1</fullName>
        <shortName>Protein SDR32C1</shortName>
    </alternativeName>
</protein>
<gene>
    <name type="primary">dhrs7b</name>
    <name evidence="2" type="synonym">sdr32c1</name>
</gene>
<organism>
    <name type="scientific">Xenopus laevis</name>
    <name type="common">African clawed frog</name>
    <dbReference type="NCBI Taxonomy" id="8355"/>
    <lineage>
        <taxon>Eukaryota</taxon>
        <taxon>Metazoa</taxon>
        <taxon>Chordata</taxon>
        <taxon>Craniata</taxon>
        <taxon>Vertebrata</taxon>
        <taxon>Euteleostomi</taxon>
        <taxon>Amphibia</taxon>
        <taxon>Batrachia</taxon>
        <taxon>Anura</taxon>
        <taxon>Pipoidea</taxon>
        <taxon>Pipidae</taxon>
        <taxon>Xenopodinae</taxon>
        <taxon>Xenopus</taxon>
        <taxon>Xenopus</taxon>
    </lineage>
</organism>
<evidence type="ECO:0000250" key="1">
    <source>
        <dbReference type="UniProtKB" id="Q5RJY4"/>
    </source>
</evidence>
<evidence type="ECO:0000250" key="2">
    <source>
        <dbReference type="UniProtKB" id="Q6IAN0"/>
    </source>
</evidence>
<evidence type="ECO:0000250" key="3">
    <source>
        <dbReference type="UniProtKB" id="Q99714"/>
    </source>
</evidence>
<evidence type="ECO:0000255" key="4"/>
<evidence type="ECO:0000255" key="5">
    <source>
        <dbReference type="PROSITE-ProRule" id="PRU10001"/>
    </source>
</evidence>
<evidence type="ECO:0000305" key="6"/>
<keyword id="KW-0256">Endoplasmic reticulum</keyword>
<keyword id="KW-0472">Membrane</keyword>
<keyword id="KW-0520">NAD</keyword>
<keyword id="KW-0521">NADP</keyword>
<keyword id="KW-0560">Oxidoreductase</keyword>
<keyword id="KW-1185">Reference proteome</keyword>
<keyword id="KW-0735">Signal-anchor</keyword>
<keyword id="KW-0812">Transmembrane</keyword>
<keyword id="KW-1133">Transmembrane helix</keyword>
<dbReference type="EC" id="1.1.-.-" evidence="6"/>
<dbReference type="EMBL" id="BC123346">
    <property type="protein sequence ID" value="AAI23347.1"/>
    <property type="molecule type" value="mRNA"/>
</dbReference>
<dbReference type="RefSeq" id="NP_001090401.1">
    <property type="nucleotide sequence ID" value="NM_001096932.1"/>
</dbReference>
<dbReference type="SMR" id="Q0IH28"/>
<dbReference type="DNASU" id="779313"/>
<dbReference type="GeneID" id="779313"/>
<dbReference type="KEGG" id="xla:779313"/>
<dbReference type="AGR" id="Xenbase:XB-GENE-946478"/>
<dbReference type="CTD" id="779313"/>
<dbReference type="Xenbase" id="XB-GENE-946478">
    <property type="gene designation" value="dhrs7b.L"/>
</dbReference>
<dbReference type="OrthoDB" id="5307821at2759"/>
<dbReference type="Proteomes" id="UP000186698">
    <property type="component" value="Chromosome 9_10L"/>
</dbReference>
<dbReference type="Bgee" id="779313">
    <property type="expression patterns" value="Expressed in muscle tissue and 20 other cell types or tissues"/>
</dbReference>
<dbReference type="GO" id="GO:0005789">
    <property type="term" value="C:endoplasmic reticulum membrane"/>
    <property type="evidence" value="ECO:0007669"/>
    <property type="project" value="UniProtKB-SubCell"/>
</dbReference>
<dbReference type="GO" id="GO:0016020">
    <property type="term" value="C:membrane"/>
    <property type="evidence" value="ECO:0000318"/>
    <property type="project" value="GO_Central"/>
</dbReference>
<dbReference type="GO" id="GO:0016491">
    <property type="term" value="F:oxidoreductase activity"/>
    <property type="evidence" value="ECO:0007669"/>
    <property type="project" value="UniProtKB-KW"/>
</dbReference>
<dbReference type="CDD" id="cd05332">
    <property type="entry name" value="11beta-HSD1_like_SDR_c"/>
    <property type="match status" value="1"/>
</dbReference>
<dbReference type="FunFam" id="3.40.50.720:FF:000122">
    <property type="entry name" value="Dehydrogenase/reductase SDR family member 7B"/>
    <property type="match status" value="1"/>
</dbReference>
<dbReference type="Gene3D" id="3.40.50.720">
    <property type="entry name" value="NAD(P)-binding Rossmann-like Domain"/>
    <property type="match status" value="1"/>
</dbReference>
<dbReference type="InterPro" id="IPR036291">
    <property type="entry name" value="NAD(P)-bd_dom_sf"/>
</dbReference>
<dbReference type="InterPro" id="IPR020904">
    <property type="entry name" value="Sc_DH/Rdtase_CS"/>
</dbReference>
<dbReference type="InterPro" id="IPR002347">
    <property type="entry name" value="SDR_fam"/>
</dbReference>
<dbReference type="NCBIfam" id="NF004825">
    <property type="entry name" value="PRK06181.1"/>
    <property type="match status" value="1"/>
</dbReference>
<dbReference type="PANTHER" id="PTHR44196">
    <property type="entry name" value="DEHYDROGENASE/REDUCTASE SDR FAMILY MEMBER 7B"/>
    <property type="match status" value="1"/>
</dbReference>
<dbReference type="PANTHER" id="PTHR44196:SF1">
    <property type="entry name" value="DEHYDROGENASE_REDUCTASE SDR FAMILY MEMBER 7B"/>
    <property type="match status" value="1"/>
</dbReference>
<dbReference type="Pfam" id="PF00106">
    <property type="entry name" value="adh_short"/>
    <property type="match status" value="1"/>
</dbReference>
<dbReference type="PIRSF" id="PIRSF000126">
    <property type="entry name" value="11-beta-HSD1"/>
    <property type="match status" value="1"/>
</dbReference>
<dbReference type="PRINTS" id="PR00081">
    <property type="entry name" value="GDHRDH"/>
</dbReference>
<dbReference type="PRINTS" id="PR00080">
    <property type="entry name" value="SDRFAMILY"/>
</dbReference>
<dbReference type="SUPFAM" id="SSF51735">
    <property type="entry name" value="NAD(P)-binding Rossmann-fold domains"/>
    <property type="match status" value="1"/>
</dbReference>
<dbReference type="PROSITE" id="PS00061">
    <property type="entry name" value="ADH_SHORT"/>
    <property type="match status" value="1"/>
</dbReference>
<feature type="chain" id="PRO_0000312110" description="Dehydrogenase/reductase SDR family member 7B">
    <location>
        <begin position="1"/>
        <end position="323"/>
    </location>
</feature>
<feature type="topological domain" description="Cytoplasmic" evidence="4">
    <location>
        <begin position="1"/>
        <end position="4"/>
    </location>
</feature>
<feature type="transmembrane region" description="Helical; Signal-anchor for type II membrane protein" evidence="4">
    <location>
        <begin position="5"/>
        <end position="25"/>
    </location>
</feature>
<feature type="topological domain" description="Lumenal" evidence="4">
    <location>
        <begin position="26"/>
        <end position="272"/>
    </location>
</feature>
<feature type="active site" description="Proton acceptor" evidence="5">
    <location>
        <position position="191"/>
    </location>
</feature>
<feature type="binding site" evidence="3">
    <location>
        <position position="46"/>
    </location>
    <ligand>
        <name>NAD(+)</name>
        <dbReference type="ChEBI" id="CHEBI:57540"/>
    </ligand>
</feature>
<feature type="binding site" evidence="3">
    <location>
        <position position="48"/>
    </location>
    <ligand>
        <name>NAD(+)</name>
        <dbReference type="ChEBI" id="CHEBI:57540"/>
    </ligand>
</feature>
<feature type="binding site" evidence="3">
    <location>
        <position position="178"/>
    </location>
    <ligand>
        <name>substrate</name>
    </ligand>
</feature>
<feature type="binding site" evidence="3">
    <location>
        <position position="191"/>
    </location>
    <ligand>
        <name>NAD(+)</name>
        <dbReference type="ChEBI" id="CHEBI:57540"/>
    </ligand>
</feature>
<feature type="binding site" evidence="3">
    <location>
        <position position="195"/>
    </location>
    <ligand>
        <name>NAD(+)</name>
        <dbReference type="ChEBI" id="CHEBI:57540"/>
    </ligand>
</feature>
<feature type="binding site" evidence="3">
    <location>
        <position position="226"/>
    </location>
    <ligand>
        <name>NAD(+)</name>
        <dbReference type="ChEBI" id="CHEBI:57540"/>
    </ligand>
</feature>
<sequence>MDLTSWAIFPLLLASIGVYGLYKLLQKLRSGAYLQAAVVVITGATSGLGKECAKVFYAAGSHLVLCGRDEERLKDLVQELNNMRLKSTQLHKPHMVIFDLSDVEAVNTAAKEILHLAGRVDILINNAGISYRGTILDTKVSVDRMVMDTNYFGPVALTKALLPSMIKNRRGHVVVISSVQGKISIPFRSAYSASKHATQAFFDCLRAEMSPYDIDVTVVNPGYIKTNLSLNAVTGDGSGYGVMDKNTADGRTPEEVAQTVLRAVGERRKELLVAGLVPTLAVYLRTLAPTLFFSIMSARAKKRTKAKGFITNSNLKAKITVCI</sequence>
<proteinExistence type="evidence at transcript level"/>
<comment type="function">
    <text evidence="6">Putative oxidoreductase.</text>
</comment>
<comment type="subcellular location">
    <subcellularLocation>
        <location evidence="1">Endoplasmic reticulum membrane</location>
        <topology evidence="1">Single-pass type II membrane protein</topology>
    </subcellularLocation>
</comment>
<comment type="similarity">
    <text evidence="6">Belongs to the short-chain dehydrogenases/reductases (SDR) family.</text>
</comment>